<gene>
    <name type="primary">MT-CYB</name>
    <name type="synonym">COB</name>
    <name type="synonym">CYTB</name>
    <name type="synonym">MTCYB</name>
</gene>
<accession>Q9MLJ7</accession>
<proteinExistence type="inferred from homology"/>
<keyword id="KW-0249">Electron transport</keyword>
<keyword id="KW-0349">Heme</keyword>
<keyword id="KW-0408">Iron</keyword>
<keyword id="KW-0472">Membrane</keyword>
<keyword id="KW-0479">Metal-binding</keyword>
<keyword id="KW-0496">Mitochondrion</keyword>
<keyword id="KW-0999">Mitochondrion inner membrane</keyword>
<keyword id="KW-0679">Respiratory chain</keyword>
<keyword id="KW-0812">Transmembrane</keyword>
<keyword id="KW-1133">Transmembrane helix</keyword>
<keyword id="KW-0813">Transport</keyword>
<keyword id="KW-0830">Ubiquinone</keyword>
<dbReference type="EMBL" id="AF217831">
    <property type="protein sequence ID" value="AAF37250.1"/>
    <property type="molecule type" value="Genomic_DNA"/>
</dbReference>
<dbReference type="SMR" id="Q9MLJ7"/>
<dbReference type="GO" id="GO:0005743">
    <property type="term" value="C:mitochondrial inner membrane"/>
    <property type="evidence" value="ECO:0007669"/>
    <property type="project" value="UniProtKB-SubCell"/>
</dbReference>
<dbReference type="GO" id="GO:0045275">
    <property type="term" value="C:respiratory chain complex III"/>
    <property type="evidence" value="ECO:0007669"/>
    <property type="project" value="InterPro"/>
</dbReference>
<dbReference type="GO" id="GO:0046872">
    <property type="term" value="F:metal ion binding"/>
    <property type="evidence" value="ECO:0007669"/>
    <property type="project" value="UniProtKB-KW"/>
</dbReference>
<dbReference type="GO" id="GO:0008121">
    <property type="term" value="F:ubiquinol-cytochrome-c reductase activity"/>
    <property type="evidence" value="ECO:0007669"/>
    <property type="project" value="InterPro"/>
</dbReference>
<dbReference type="GO" id="GO:0006122">
    <property type="term" value="P:mitochondrial electron transport, ubiquinol to cytochrome c"/>
    <property type="evidence" value="ECO:0007669"/>
    <property type="project" value="TreeGrafter"/>
</dbReference>
<dbReference type="CDD" id="cd00290">
    <property type="entry name" value="cytochrome_b_C"/>
    <property type="match status" value="1"/>
</dbReference>
<dbReference type="CDD" id="cd00284">
    <property type="entry name" value="Cytochrome_b_N"/>
    <property type="match status" value="1"/>
</dbReference>
<dbReference type="Gene3D" id="1.20.810.10">
    <property type="entry name" value="Cytochrome Bc1 Complex, Chain C"/>
    <property type="match status" value="1"/>
</dbReference>
<dbReference type="InterPro" id="IPR005798">
    <property type="entry name" value="Cyt_b/b6_C"/>
</dbReference>
<dbReference type="InterPro" id="IPR036150">
    <property type="entry name" value="Cyt_b/b6_C_sf"/>
</dbReference>
<dbReference type="InterPro" id="IPR005797">
    <property type="entry name" value="Cyt_b/b6_N"/>
</dbReference>
<dbReference type="InterPro" id="IPR027387">
    <property type="entry name" value="Cytb/b6-like_sf"/>
</dbReference>
<dbReference type="InterPro" id="IPR030689">
    <property type="entry name" value="Cytochrome_b"/>
</dbReference>
<dbReference type="InterPro" id="IPR048260">
    <property type="entry name" value="Cytochrome_b_C_euk/bac"/>
</dbReference>
<dbReference type="InterPro" id="IPR048259">
    <property type="entry name" value="Cytochrome_b_N_euk/bac"/>
</dbReference>
<dbReference type="InterPro" id="IPR016174">
    <property type="entry name" value="Di-haem_cyt_TM"/>
</dbReference>
<dbReference type="PANTHER" id="PTHR19271">
    <property type="entry name" value="CYTOCHROME B"/>
    <property type="match status" value="1"/>
</dbReference>
<dbReference type="PANTHER" id="PTHR19271:SF16">
    <property type="entry name" value="CYTOCHROME B"/>
    <property type="match status" value="1"/>
</dbReference>
<dbReference type="Pfam" id="PF00032">
    <property type="entry name" value="Cytochrom_B_C"/>
    <property type="match status" value="1"/>
</dbReference>
<dbReference type="Pfam" id="PF00033">
    <property type="entry name" value="Cytochrome_B"/>
    <property type="match status" value="1"/>
</dbReference>
<dbReference type="PIRSF" id="PIRSF038885">
    <property type="entry name" value="COB"/>
    <property type="match status" value="1"/>
</dbReference>
<dbReference type="SUPFAM" id="SSF81648">
    <property type="entry name" value="a domain/subunit of cytochrome bc1 complex (Ubiquinol-cytochrome c reductase)"/>
    <property type="match status" value="1"/>
</dbReference>
<dbReference type="SUPFAM" id="SSF81342">
    <property type="entry name" value="Transmembrane di-heme cytochromes"/>
    <property type="match status" value="1"/>
</dbReference>
<dbReference type="PROSITE" id="PS51003">
    <property type="entry name" value="CYTB_CTER"/>
    <property type="match status" value="1"/>
</dbReference>
<dbReference type="PROSITE" id="PS51002">
    <property type="entry name" value="CYTB_NTER"/>
    <property type="match status" value="1"/>
</dbReference>
<evidence type="ECO:0000250" key="1"/>
<evidence type="ECO:0000250" key="2">
    <source>
        <dbReference type="UniProtKB" id="P00157"/>
    </source>
</evidence>
<evidence type="ECO:0000255" key="3">
    <source>
        <dbReference type="PROSITE-ProRule" id="PRU00967"/>
    </source>
</evidence>
<evidence type="ECO:0000255" key="4">
    <source>
        <dbReference type="PROSITE-ProRule" id="PRU00968"/>
    </source>
</evidence>
<comment type="function">
    <text evidence="2">Component of the ubiquinol-cytochrome c reductase complex (complex III or cytochrome b-c1 complex) that is part of the mitochondrial respiratory chain. The b-c1 complex mediates electron transfer from ubiquinol to cytochrome c. Contributes to the generation of a proton gradient across the mitochondrial membrane that is then used for ATP synthesis.</text>
</comment>
<comment type="cofactor">
    <cofactor evidence="2">
        <name>heme b</name>
        <dbReference type="ChEBI" id="CHEBI:60344"/>
    </cofactor>
    <text evidence="2">Binds 2 heme b groups non-covalently.</text>
</comment>
<comment type="subunit">
    <text evidence="2">The cytochrome bc1 complex contains 3 respiratory subunits (MT-CYB, CYC1 and UQCRFS1), 2 core proteins (UQCRC1 and UQCRC2) and probably 6 low-molecular weight proteins.</text>
</comment>
<comment type="subcellular location">
    <subcellularLocation>
        <location evidence="2">Mitochondrion inner membrane</location>
        <topology evidence="2">Multi-pass membrane protein</topology>
    </subcellularLocation>
</comment>
<comment type="miscellaneous">
    <text evidence="1">Heme 1 (or BL or b562) is low-potential and absorbs at about 562 nm, and heme 2 (or BH or b566) is high-potential and absorbs at about 566 nm.</text>
</comment>
<comment type="similarity">
    <text evidence="3 4">Belongs to the cytochrome b family.</text>
</comment>
<comment type="caution">
    <text evidence="2">The full-length protein contains only eight transmembrane helices, not nine as predicted by bioinformatics tools.</text>
</comment>
<sequence length="372" mass="42229">MSNQHTLLISNLLPVGSNISTWWNFGSMLLTCLMMQIMTGFFLAIHYTANINLAFSSVIHIMRDVPYGWIMQNIHAIGASVFFICIYIHIARGLYYGLYMNKNVWFSGTALLITLMATAFFGYVLPWGQMSFWAATVITNLLTAIPYLGATVTTWFWGGFSVNDPTLTGFFALHFILPFTIASLSSIHIILLHNEGSSNPLGTNSDIDKIPFHPYHSYKDMLMTTSMFMLMFMILSFMPDLFNDPENFSKANPLITPQHIKPEWYFLFAYGILRSIPNKLGGTLALLMSVTILITAPFTHTSLVRSMTFRPLAQTLFWTLIATFITITWTATKPVEPPFILISQMASVFYFSFFIMNPLLGWTENKIMMMNS</sequence>
<geneLocation type="mitochondrion"/>
<reference key="1">
    <citation type="journal article" date="2000" name="Mol. Phylogenet. Evol.">
        <title>Phylogenetic relationships of elapid snakes based on cytochrome b mtDNA sequences.</title>
        <authorList>
            <person name="Slowinski J.B."/>
            <person name="Keogh J.S."/>
        </authorList>
    </citation>
    <scope>NUCLEOTIDE SEQUENCE [GENOMIC DNA]</scope>
</reference>
<name>CYB_SINJA</name>
<feature type="chain" id="PRO_0000060707" description="Cytochrome b">
    <location>
        <begin position="1"/>
        <end position="372"/>
    </location>
</feature>
<feature type="transmembrane region" description="Helical" evidence="2">
    <location>
        <begin position="25"/>
        <end position="45"/>
    </location>
</feature>
<feature type="transmembrane region" description="Helical" evidence="2">
    <location>
        <begin position="69"/>
        <end position="90"/>
    </location>
</feature>
<feature type="transmembrane region" description="Helical" evidence="2">
    <location>
        <begin position="105"/>
        <end position="125"/>
    </location>
</feature>
<feature type="transmembrane region" description="Helical" evidence="2">
    <location>
        <begin position="170"/>
        <end position="190"/>
    </location>
</feature>
<feature type="transmembrane region" description="Helical" evidence="2">
    <location>
        <begin position="218"/>
        <end position="238"/>
    </location>
</feature>
<feature type="transmembrane region" description="Helical" evidence="2">
    <location>
        <begin position="280"/>
        <end position="300"/>
    </location>
</feature>
<feature type="transmembrane region" description="Helical" evidence="2">
    <location>
        <begin position="312"/>
        <end position="332"/>
    </location>
</feature>
<feature type="transmembrane region" description="Helical" evidence="2">
    <location>
        <begin position="339"/>
        <end position="358"/>
    </location>
</feature>
<feature type="binding site" description="axial binding residue" evidence="2">
    <location>
        <position position="75"/>
    </location>
    <ligand>
        <name>heme b</name>
        <dbReference type="ChEBI" id="CHEBI:60344"/>
        <label>b562</label>
    </ligand>
    <ligandPart>
        <name>Fe</name>
        <dbReference type="ChEBI" id="CHEBI:18248"/>
    </ligandPart>
</feature>
<feature type="binding site" description="axial binding residue" evidence="2">
    <location>
        <position position="89"/>
    </location>
    <ligand>
        <name>heme b</name>
        <dbReference type="ChEBI" id="CHEBI:60344"/>
        <label>b566</label>
    </ligand>
    <ligandPart>
        <name>Fe</name>
        <dbReference type="ChEBI" id="CHEBI:18248"/>
    </ligandPart>
</feature>
<feature type="binding site" description="axial binding residue" evidence="2">
    <location>
        <position position="174"/>
    </location>
    <ligand>
        <name>heme b</name>
        <dbReference type="ChEBI" id="CHEBI:60344"/>
        <label>b562</label>
    </ligand>
    <ligandPart>
        <name>Fe</name>
        <dbReference type="ChEBI" id="CHEBI:18248"/>
    </ligandPart>
</feature>
<feature type="binding site" description="axial binding residue" evidence="2">
    <location>
        <position position="188"/>
    </location>
    <ligand>
        <name>heme b</name>
        <dbReference type="ChEBI" id="CHEBI:60344"/>
        <label>b566</label>
    </ligand>
    <ligandPart>
        <name>Fe</name>
        <dbReference type="ChEBI" id="CHEBI:18248"/>
    </ligandPart>
</feature>
<feature type="binding site" evidence="2">
    <location>
        <position position="193"/>
    </location>
    <ligand>
        <name>a ubiquinone</name>
        <dbReference type="ChEBI" id="CHEBI:16389"/>
    </ligand>
</feature>
<organism>
    <name type="scientific">Sinomicrurus japonicus</name>
    <name type="common">Coral snake</name>
    <name type="synonym">Calliophis japonicus</name>
    <dbReference type="NCBI Taxonomy" id="184156"/>
    <lineage>
        <taxon>Eukaryota</taxon>
        <taxon>Metazoa</taxon>
        <taxon>Chordata</taxon>
        <taxon>Craniata</taxon>
        <taxon>Vertebrata</taxon>
        <taxon>Euteleostomi</taxon>
        <taxon>Lepidosauria</taxon>
        <taxon>Squamata</taxon>
        <taxon>Bifurcata</taxon>
        <taxon>Unidentata</taxon>
        <taxon>Episquamata</taxon>
        <taxon>Toxicofera</taxon>
        <taxon>Serpentes</taxon>
        <taxon>Colubroidea</taxon>
        <taxon>Elapidae</taxon>
        <taxon>Elapinae</taxon>
        <taxon>Sinomicrurus</taxon>
    </lineage>
</organism>
<protein>
    <recommendedName>
        <fullName>Cytochrome b</fullName>
    </recommendedName>
    <alternativeName>
        <fullName>Complex III subunit 3</fullName>
    </alternativeName>
    <alternativeName>
        <fullName>Complex III subunit III</fullName>
    </alternativeName>
    <alternativeName>
        <fullName>Cytochrome b-c1 complex subunit 3</fullName>
    </alternativeName>
    <alternativeName>
        <fullName>Ubiquinol-cytochrome-c reductase complex cytochrome b subunit</fullName>
    </alternativeName>
</protein>